<dbReference type="EMBL" id="AE016828">
    <property type="protein sequence ID" value="AAO90403.1"/>
    <property type="molecule type" value="Genomic_DNA"/>
</dbReference>
<dbReference type="RefSeq" id="NP_819889.1">
    <property type="nucleotide sequence ID" value="NC_002971.3"/>
</dbReference>
<dbReference type="RefSeq" id="WP_005768810.1">
    <property type="nucleotide sequence ID" value="NZ_CDBG01000001.1"/>
</dbReference>
<dbReference type="SMR" id="Q83D70"/>
<dbReference type="STRING" id="227377.CBU_0870"/>
<dbReference type="DNASU" id="1208763"/>
<dbReference type="EnsemblBacteria" id="AAO90403">
    <property type="protein sequence ID" value="AAO90403"/>
    <property type="gene ID" value="CBU_0870"/>
</dbReference>
<dbReference type="GeneID" id="1208763"/>
<dbReference type="KEGG" id="cbu:CBU_0870"/>
<dbReference type="PATRIC" id="fig|227377.7.peg.855"/>
<dbReference type="eggNOG" id="COG2938">
    <property type="taxonomic scope" value="Bacteria"/>
</dbReference>
<dbReference type="HOGENOM" id="CLU_103054_2_2_6"/>
<dbReference type="OrthoDB" id="9180899at2"/>
<dbReference type="Proteomes" id="UP000002671">
    <property type="component" value="Chromosome"/>
</dbReference>
<dbReference type="GO" id="GO:0005737">
    <property type="term" value="C:cytoplasm"/>
    <property type="evidence" value="ECO:0007669"/>
    <property type="project" value="UniProtKB-SubCell"/>
</dbReference>
<dbReference type="GO" id="GO:0006105">
    <property type="term" value="P:succinate metabolic process"/>
    <property type="evidence" value="ECO:0000318"/>
    <property type="project" value="GO_Central"/>
</dbReference>
<dbReference type="Gene3D" id="1.10.150.250">
    <property type="entry name" value="Flavinator of succinate dehydrogenase"/>
    <property type="match status" value="1"/>
</dbReference>
<dbReference type="InterPro" id="IPR005631">
    <property type="entry name" value="SDH"/>
</dbReference>
<dbReference type="InterPro" id="IPR036714">
    <property type="entry name" value="SDH_sf"/>
</dbReference>
<dbReference type="InterPro" id="IPR050531">
    <property type="entry name" value="SdhE_FAD_assembly_factor"/>
</dbReference>
<dbReference type="PANTHER" id="PTHR39585">
    <property type="entry name" value="FAD ASSEMBLY FACTOR SDHE"/>
    <property type="match status" value="1"/>
</dbReference>
<dbReference type="PANTHER" id="PTHR39585:SF1">
    <property type="entry name" value="FAD ASSEMBLY FACTOR SDHE"/>
    <property type="match status" value="1"/>
</dbReference>
<dbReference type="Pfam" id="PF03937">
    <property type="entry name" value="Sdh5"/>
    <property type="match status" value="1"/>
</dbReference>
<dbReference type="SUPFAM" id="SSF109910">
    <property type="entry name" value="YgfY-like"/>
    <property type="match status" value="1"/>
</dbReference>
<protein>
    <recommendedName>
        <fullName>FAD assembly factor SdhE</fullName>
    </recommendedName>
</protein>
<sequence length="82" mass="9924">MNEPLASKKIRWKCRRGMLELDILLERFYEEKFRSLTKNEKEIFNQLLDQPDPLLYDWLLGHVTPESSEFKKIIRKIQQLSS</sequence>
<name>SDHE_COXBU</name>
<proteinExistence type="inferred from homology"/>
<accession>Q83D70</accession>
<comment type="function">
    <text evidence="1">An FAD assembly protein, which accelerates covalent attachment of the cofactor into other proteins. Plays an essential role in the assembly of succinate dehydrogenase (SDH, respiratory complex II), an enzyme complex that is a component of both the tricarboxylic acid cycle and the electron transport chain, and which couples the oxidation of succinate to fumarate with the reduction of ubiquinone (coenzyme Q) to ubiquinol. Required for flavinylation (covalent attachment of FAD) of the flavoprotein subunit SdhA of SDH and other flavinylated proteins as well.</text>
</comment>
<comment type="subcellular location">
    <subcellularLocation>
        <location evidence="1">Cytoplasm</location>
    </subcellularLocation>
</comment>
<comment type="similarity">
    <text evidence="2">Belongs to the SdhE FAD assembly factor family.</text>
</comment>
<gene>
    <name type="primary">sdhE</name>
    <name type="ordered locus">CBU_0870</name>
</gene>
<organism>
    <name type="scientific">Coxiella burnetii (strain RSA 493 / Nine Mile phase I)</name>
    <dbReference type="NCBI Taxonomy" id="227377"/>
    <lineage>
        <taxon>Bacteria</taxon>
        <taxon>Pseudomonadati</taxon>
        <taxon>Pseudomonadota</taxon>
        <taxon>Gammaproteobacteria</taxon>
        <taxon>Legionellales</taxon>
        <taxon>Coxiellaceae</taxon>
        <taxon>Coxiella</taxon>
    </lineage>
</organism>
<feature type="chain" id="PRO_0000214393" description="FAD assembly factor SdhE">
    <location>
        <begin position="1"/>
        <end position="82"/>
    </location>
</feature>
<reference key="1">
    <citation type="journal article" date="2003" name="Proc. Natl. Acad. Sci. U.S.A.">
        <title>Complete genome sequence of the Q-fever pathogen, Coxiella burnetii.</title>
        <authorList>
            <person name="Seshadri R."/>
            <person name="Paulsen I.T."/>
            <person name="Eisen J.A."/>
            <person name="Read T.D."/>
            <person name="Nelson K.E."/>
            <person name="Nelson W.C."/>
            <person name="Ward N.L."/>
            <person name="Tettelin H."/>
            <person name="Davidsen T.M."/>
            <person name="Beanan M.J."/>
            <person name="DeBoy R.T."/>
            <person name="Daugherty S.C."/>
            <person name="Brinkac L.M."/>
            <person name="Madupu R."/>
            <person name="Dodson R.J."/>
            <person name="Khouri H.M."/>
            <person name="Lee K.H."/>
            <person name="Carty H.A."/>
            <person name="Scanlan D."/>
            <person name="Heinzen R.A."/>
            <person name="Thompson H.A."/>
            <person name="Samuel J.E."/>
            <person name="Fraser C.M."/>
            <person name="Heidelberg J.F."/>
        </authorList>
    </citation>
    <scope>NUCLEOTIDE SEQUENCE [LARGE SCALE GENOMIC DNA]</scope>
    <source>
        <strain>RSA 493 / Nine Mile phase I</strain>
    </source>
</reference>
<evidence type="ECO:0000250" key="1">
    <source>
        <dbReference type="UniProtKB" id="G4V4G2"/>
    </source>
</evidence>
<evidence type="ECO:0000305" key="2"/>
<keyword id="KW-0143">Chaperone</keyword>
<keyword id="KW-0963">Cytoplasm</keyword>
<keyword id="KW-1185">Reference proteome</keyword>